<keyword id="KW-0067">ATP-binding</keyword>
<keyword id="KW-0963">Cytoplasm</keyword>
<keyword id="KW-0418">Kinase</keyword>
<keyword id="KW-0460">Magnesium</keyword>
<keyword id="KW-0479">Metal-binding</keyword>
<keyword id="KW-0546">Nucleotide metabolism</keyword>
<keyword id="KW-0547">Nucleotide-binding</keyword>
<keyword id="KW-0597">Phosphoprotein</keyword>
<keyword id="KW-1185">Reference proteome</keyword>
<keyword id="KW-0808">Transferase</keyword>
<name>NDK_GEOUR</name>
<accession>A5GEC1</accession>
<comment type="function">
    <text evidence="1">Major role in the synthesis of nucleoside triphosphates other than ATP. The ATP gamma phosphate is transferred to the NDP beta phosphate via a ping-pong mechanism, using a phosphorylated active-site intermediate.</text>
</comment>
<comment type="catalytic activity">
    <reaction evidence="1">
        <text>a 2'-deoxyribonucleoside 5'-diphosphate + ATP = a 2'-deoxyribonucleoside 5'-triphosphate + ADP</text>
        <dbReference type="Rhea" id="RHEA:44640"/>
        <dbReference type="ChEBI" id="CHEBI:30616"/>
        <dbReference type="ChEBI" id="CHEBI:61560"/>
        <dbReference type="ChEBI" id="CHEBI:73316"/>
        <dbReference type="ChEBI" id="CHEBI:456216"/>
        <dbReference type="EC" id="2.7.4.6"/>
    </reaction>
</comment>
<comment type="catalytic activity">
    <reaction evidence="1">
        <text>a ribonucleoside 5'-diphosphate + ATP = a ribonucleoside 5'-triphosphate + ADP</text>
        <dbReference type="Rhea" id="RHEA:18113"/>
        <dbReference type="ChEBI" id="CHEBI:30616"/>
        <dbReference type="ChEBI" id="CHEBI:57930"/>
        <dbReference type="ChEBI" id="CHEBI:61557"/>
        <dbReference type="ChEBI" id="CHEBI:456216"/>
        <dbReference type="EC" id="2.7.4.6"/>
    </reaction>
</comment>
<comment type="cofactor">
    <cofactor evidence="1">
        <name>Mg(2+)</name>
        <dbReference type="ChEBI" id="CHEBI:18420"/>
    </cofactor>
</comment>
<comment type="subunit">
    <text evidence="1">Homotetramer.</text>
</comment>
<comment type="subcellular location">
    <subcellularLocation>
        <location evidence="1">Cytoplasm</location>
    </subcellularLocation>
</comment>
<comment type="similarity">
    <text evidence="1">Belongs to the NDK family.</text>
</comment>
<gene>
    <name evidence="1" type="primary">ndk</name>
    <name type="ordered locus">Gura_1580</name>
</gene>
<feature type="chain" id="PRO_1000080964" description="Nucleoside diphosphate kinase">
    <location>
        <begin position="1"/>
        <end position="137"/>
    </location>
</feature>
<feature type="active site" description="Pros-phosphohistidine intermediate" evidence="1">
    <location>
        <position position="115"/>
    </location>
</feature>
<feature type="binding site" evidence="1">
    <location>
        <position position="9"/>
    </location>
    <ligand>
        <name>ATP</name>
        <dbReference type="ChEBI" id="CHEBI:30616"/>
    </ligand>
</feature>
<feature type="binding site" evidence="1">
    <location>
        <position position="57"/>
    </location>
    <ligand>
        <name>ATP</name>
        <dbReference type="ChEBI" id="CHEBI:30616"/>
    </ligand>
</feature>
<feature type="binding site" evidence="1">
    <location>
        <position position="85"/>
    </location>
    <ligand>
        <name>ATP</name>
        <dbReference type="ChEBI" id="CHEBI:30616"/>
    </ligand>
</feature>
<feature type="binding site" evidence="1">
    <location>
        <position position="91"/>
    </location>
    <ligand>
        <name>ATP</name>
        <dbReference type="ChEBI" id="CHEBI:30616"/>
    </ligand>
</feature>
<feature type="binding site" evidence="1">
    <location>
        <position position="102"/>
    </location>
    <ligand>
        <name>ATP</name>
        <dbReference type="ChEBI" id="CHEBI:30616"/>
    </ligand>
</feature>
<feature type="binding site" evidence="1">
    <location>
        <position position="112"/>
    </location>
    <ligand>
        <name>ATP</name>
        <dbReference type="ChEBI" id="CHEBI:30616"/>
    </ligand>
</feature>
<proteinExistence type="inferred from homology"/>
<reference key="1">
    <citation type="submission" date="2007-05" db="EMBL/GenBank/DDBJ databases">
        <title>Complete sequence of Geobacter uraniireducens Rf4.</title>
        <authorList>
            <consortium name="US DOE Joint Genome Institute"/>
            <person name="Copeland A."/>
            <person name="Lucas S."/>
            <person name="Lapidus A."/>
            <person name="Barry K."/>
            <person name="Detter J.C."/>
            <person name="Glavina del Rio T."/>
            <person name="Hammon N."/>
            <person name="Israni S."/>
            <person name="Dalin E."/>
            <person name="Tice H."/>
            <person name="Pitluck S."/>
            <person name="Chertkov O."/>
            <person name="Brettin T."/>
            <person name="Bruce D."/>
            <person name="Han C."/>
            <person name="Schmutz J."/>
            <person name="Larimer F."/>
            <person name="Land M."/>
            <person name="Hauser L."/>
            <person name="Kyrpides N."/>
            <person name="Mikhailova N."/>
            <person name="Shelobolina E."/>
            <person name="Aklujkar M."/>
            <person name="Lovley D."/>
            <person name="Richardson P."/>
        </authorList>
    </citation>
    <scope>NUCLEOTIDE SEQUENCE [LARGE SCALE GENOMIC DNA]</scope>
    <source>
        <strain>ATCC BAA-1134 / JCM 13001 / Rf4</strain>
    </source>
</reference>
<evidence type="ECO:0000255" key="1">
    <source>
        <dbReference type="HAMAP-Rule" id="MF_00451"/>
    </source>
</evidence>
<organism>
    <name type="scientific">Geotalea uraniireducens (strain Rf4)</name>
    <name type="common">Geobacter uraniireducens</name>
    <dbReference type="NCBI Taxonomy" id="351605"/>
    <lineage>
        <taxon>Bacteria</taxon>
        <taxon>Pseudomonadati</taxon>
        <taxon>Thermodesulfobacteriota</taxon>
        <taxon>Desulfuromonadia</taxon>
        <taxon>Geobacterales</taxon>
        <taxon>Geobacteraceae</taxon>
        <taxon>Geotalea</taxon>
    </lineage>
</organism>
<dbReference type="EC" id="2.7.4.6" evidence="1"/>
<dbReference type="EMBL" id="CP000698">
    <property type="protein sequence ID" value="ABQ25776.1"/>
    <property type="molecule type" value="Genomic_DNA"/>
</dbReference>
<dbReference type="RefSeq" id="WP_011938487.1">
    <property type="nucleotide sequence ID" value="NC_009483.1"/>
</dbReference>
<dbReference type="SMR" id="A5GEC1"/>
<dbReference type="STRING" id="351605.Gura_1580"/>
<dbReference type="KEGG" id="gur:Gura_1580"/>
<dbReference type="HOGENOM" id="CLU_060216_8_1_7"/>
<dbReference type="OrthoDB" id="9801161at2"/>
<dbReference type="Proteomes" id="UP000006695">
    <property type="component" value="Chromosome"/>
</dbReference>
<dbReference type="GO" id="GO:0005737">
    <property type="term" value="C:cytoplasm"/>
    <property type="evidence" value="ECO:0007669"/>
    <property type="project" value="UniProtKB-SubCell"/>
</dbReference>
<dbReference type="GO" id="GO:0005524">
    <property type="term" value="F:ATP binding"/>
    <property type="evidence" value="ECO:0007669"/>
    <property type="project" value="UniProtKB-UniRule"/>
</dbReference>
<dbReference type="GO" id="GO:0046872">
    <property type="term" value="F:metal ion binding"/>
    <property type="evidence" value="ECO:0007669"/>
    <property type="project" value="UniProtKB-KW"/>
</dbReference>
<dbReference type="GO" id="GO:0004550">
    <property type="term" value="F:nucleoside diphosphate kinase activity"/>
    <property type="evidence" value="ECO:0007669"/>
    <property type="project" value="UniProtKB-UniRule"/>
</dbReference>
<dbReference type="GO" id="GO:0006241">
    <property type="term" value="P:CTP biosynthetic process"/>
    <property type="evidence" value="ECO:0007669"/>
    <property type="project" value="UniProtKB-UniRule"/>
</dbReference>
<dbReference type="GO" id="GO:0006183">
    <property type="term" value="P:GTP biosynthetic process"/>
    <property type="evidence" value="ECO:0007669"/>
    <property type="project" value="UniProtKB-UniRule"/>
</dbReference>
<dbReference type="GO" id="GO:0006228">
    <property type="term" value="P:UTP biosynthetic process"/>
    <property type="evidence" value="ECO:0007669"/>
    <property type="project" value="UniProtKB-UniRule"/>
</dbReference>
<dbReference type="CDD" id="cd04413">
    <property type="entry name" value="NDPk_I"/>
    <property type="match status" value="1"/>
</dbReference>
<dbReference type="FunFam" id="3.30.70.141:FF:000003">
    <property type="entry name" value="Nucleoside diphosphate kinase"/>
    <property type="match status" value="1"/>
</dbReference>
<dbReference type="Gene3D" id="3.30.70.141">
    <property type="entry name" value="Nucleoside diphosphate kinase-like domain"/>
    <property type="match status" value="1"/>
</dbReference>
<dbReference type="HAMAP" id="MF_00451">
    <property type="entry name" value="NDP_kinase"/>
    <property type="match status" value="1"/>
</dbReference>
<dbReference type="InterPro" id="IPR034907">
    <property type="entry name" value="NDK-like_dom"/>
</dbReference>
<dbReference type="InterPro" id="IPR036850">
    <property type="entry name" value="NDK-like_dom_sf"/>
</dbReference>
<dbReference type="InterPro" id="IPR001564">
    <property type="entry name" value="Nucleoside_diP_kinase"/>
</dbReference>
<dbReference type="InterPro" id="IPR023005">
    <property type="entry name" value="Nucleoside_diP_kinase_AS"/>
</dbReference>
<dbReference type="NCBIfam" id="NF001908">
    <property type="entry name" value="PRK00668.1"/>
    <property type="match status" value="1"/>
</dbReference>
<dbReference type="PANTHER" id="PTHR46161">
    <property type="entry name" value="NUCLEOSIDE DIPHOSPHATE KINASE"/>
    <property type="match status" value="1"/>
</dbReference>
<dbReference type="PANTHER" id="PTHR46161:SF3">
    <property type="entry name" value="NUCLEOSIDE DIPHOSPHATE KINASE DDB_G0292928-RELATED"/>
    <property type="match status" value="1"/>
</dbReference>
<dbReference type="Pfam" id="PF00334">
    <property type="entry name" value="NDK"/>
    <property type="match status" value="1"/>
</dbReference>
<dbReference type="PRINTS" id="PR01243">
    <property type="entry name" value="NUCDPKINASE"/>
</dbReference>
<dbReference type="SMART" id="SM00562">
    <property type="entry name" value="NDK"/>
    <property type="match status" value="1"/>
</dbReference>
<dbReference type="SUPFAM" id="SSF54919">
    <property type="entry name" value="Nucleoside diphosphate kinase, NDK"/>
    <property type="match status" value="1"/>
</dbReference>
<dbReference type="PROSITE" id="PS00469">
    <property type="entry name" value="NDPK"/>
    <property type="match status" value="1"/>
</dbReference>
<dbReference type="PROSITE" id="PS51374">
    <property type="entry name" value="NDPK_LIKE"/>
    <property type="match status" value="1"/>
</dbReference>
<protein>
    <recommendedName>
        <fullName evidence="1">Nucleoside diphosphate kinase</fullName>
        <shortName evidence="1">NDK</shortName>
        <shortName evidence="1">NDP kinase</shortName>
        <ecNumber evidence="1">2.7.4.6</ecNumber>
    </recommendedName>
    <alternativeName>
        <fullName evidence="1">Nucleoside-2-P kinase</fullName>
    </alternativeName>
</protein>
<sequence length="137" mass="15327">MERTFAIIKPDAVERNITGKVLDKIEGAGFKIVGMKKIHLTKNEAEGFYYVHKERPFFNDLCTFMSRNPVVVLALEKENAIAAWRELMGATNPANAEAGTIRKDFGVSIEENTVHGSDSPESAAFEIPYFFSQLELV</sequence>